<dbReference type="EC" id="2.7.4.25" evidence="1"/>
<dbReference type="EMBL" id="CP000438">
    <property type="protein sequence ID" value="ABJ12388.1"/>
    <property type="molecule type" value="Genomic_DNA"/>
</dbReference>
<dbReference type="RefSeq" id="WP_003106707.1">
    <property type="nucleotide sequence ID" value="NZ_CP034244.1"/>
</dbReference>
<dbReference type="SMR" id="Q02PW9"/>
<dbReference type="KEGG" id="pau:PA14_23320"/>
<dbReference type="PseudoCAP" id="PA14_23320"/>
<dbReference type="HOGENOM" id="CLU_079959_0_2_6"/>
<dbReference type="BioCyc" id="PAER208963:G1G74-1941-MONOMER"/>
<dbReference type="Proteomes" id="UP000000653">
    <property type="component" value="Chromosome"/>
</dbReference>
<dbReference type="GO" id="GO:0005829">
    <property type="term" value="C:cytosol"/>
    <property type="evidence" value="ECO:0007669"/>
    <property type="project" value="TreeGrafter"/>
</dbReference>
<dbReference type="GO" id="GO:0005524">
    <property type="term" value="F:ATP binding"/>
    <property type="evidence" value="ECO:0007669"/>
    <property type="project" value="UniProtKB-UniRule"/>
</dbReference>
<dbReference type="GO" id="GO:0036430">
    <property type="term" value="F:CMP kinase activity"/>
    <property type="evidence" value="ECO:0007669"/>
    <property type="project" value="RHEA"/>
</dbReference>
<dbReference type="GO" id="GO:0036431">
    <property type="term" value="F:dCMP kinase activity"/>
    <property type="evidence" value="ECO:0007669"/>
    <property type="project" value="RHEA"/>
</dbReference>
<dbReference type="GO" id="GO:0015949">
    <property type="term" value="P:nucleobase-containing small molecule interconversion"/>
    <property type="evidence" value="ECO:0007669"/>
    <property type="project" value="TreeGrafter"/>
</dbReference>
<dbReference type="GO" id="GO:0006220">
    <property type="term" value="P:pyrimidine nucleotide metabolic process"/>
    <property type="evidence" value="ECO:0007669"/>
    <property type="project" value="UniProtKB-UniRule"/>
</dbReference>
<dbReference type="CDD" id="cd02020">
    <property type="entry name" value="CMPK"/>
    <property type="match status" value="1"/>
</dbReference>
<dbReference type="FunFam" id="3.40.50.300:FF:000262">
    <property type="entry name" value="Cytidylate kinase"/>
    <property type="match status" value="1"/>
</dbReference>
<dbReference type="Gene3D" id="3.40.50.300">
    <property type="entry name" value="P-loop containing nucleotide triphosphate hydrolases"/>
    <property type="match status" value="1"/>
</dbReference>
<dbReference type="HAMAP" id="MF_00238">
    <property type="entry name" value="Cytidyl_kinase_type1"/>
    <property type="match status" value="1"/>
</dbReference>
<dbReference type="InterPro" id="IPR003136">
    <property type="entry name" value="Cytidylate_kin"/>
</dbReference>
<dbReference type="InterPro" id="IPR011994">
    <property type="entry name" value="Cytidylate_kinase_dom"/>
</dbReference>
<dbReference type="InterPro" id="IPR027417">
    <property type="entry name" value="P-loop_NTPase"/>
</dbReference>
<dbReference type="NCBIfam" id="TIGR00017">
    <property type="entry name" value="cmk"/>
    <property type="match status" value="1"/>
</dbReference>
<dbReference type="PANTHER" id="PTHR21299:SF2">
    <property type="entry name" value="CYTIDYLATE KINASE"/>
    <property type="match status" value="1"/>
</dbReference>
<dbReference type="PANTHER" id="PTHR21299">
    <property type="entry name" value="CYTIDYLATE KINASE/PANTOATE-BETA-ALANINE LIGASE"/>
    <property type="match status" value="1"/>
</dbReference>
<dbReference type="Pfam" id="PF02224">
    <property type="entry name" value="Cytidylate_kin"/>
    <property type="match status" value="1"/>
</dbReference>
<dbReference type="SUPFAM" id="SSF52540">
    <property type="entry name" value="P-loop containing nucleoside triphosphate hydrolases"/>
    <property type="match status" value="1"/>
</dbReference>
<sequence length="229" mass="24637">MNGAVPMLAIDGPSGAGKGTVAGLLARRLGWNLLDSGALYRLLAFAAVNHGVDLTNEEALKVLAAHLDVQFVAADGSHGQRIILEGEEVTDVIRTEQVGAGASQVAALPAVRDALLQRQRAFREAPGLVADGRDMGTVVFPDAPLKIFLTASAEERARRRYLQLKAKGADVDQSALLEEIRERDERDSQRAVAPLKPADDAILLDSTEMSIEAVVETIIRHCERQGWDV</sequence>
<evidence type="ECO:0000255" key="1">
    <source>
        <dbReference type="HAMAP-Rule" id="MF_00238"/>
    </source>
</evidence>
<name>KCY_PSEAB</name>
<feature type="chain" id="PRO_1000048250" description="Cytidylate kinase">
    <location>
        <begin position="1"/>
        <end position="229"/>
    </location>
</feature>
<feature type="binding site" evidence="1">
    <location>
        <begin position="12"/>
        <end position="20"/>
    </location>
    <ligand>
        <name>ATP</name>
        <dbReference type="ChEBI" id="CHEBI:30616"/>
    </ligand>
</feature>
<protein>
    <recommendedName>
        <fullName evidence="1">Cytidylate kinase</fullName>
        <shortName evidence="1">CK</shortName>
        <ecNumber evidence="1">2.7.4.25</ecNumber>
    </recommendedName>
    <alternativeName>
        <fullName evidence="1">Cytidine monophosphate kinase</fullName>
        <shortName evidence="1">CMP kinase</shortName>
    </alternativeName>
</protein>
<accession>Q02PW9</accession>
<proteinExistence type="inferred from homology"/>
<comment type="catalytic activity">
    <reaction evidence="1">
        <text>CMP + ATP = CDP + ADP</text>
        <dbReference type="Rhea" id="RHEA:11600"/>
        <dbReference type="ChEBI" id="CHEBI:30616"/>
        <dbReference type="ChEBI" id="CHEBI:58069"/>
        <dbReference type="ChEBI" id="CHEBI:60377"/>
        <dbReference type="ChEBI" id="CHEBI:456216"/>
        <dbReference type="EC" id="2.7.4.25"/>
    </reaction>
</comment>
<comment type="catalytic activity">
    <reaction evidence="1">
        <text>dCMP + ATP = dCDP + ADP</text>
        <dbReference type="Rhea" id="RHEA:25094"/>
        <dbReference type="ChEBI" id="CHEBI:30616"/>
        <dbReference type="ChEBI" id="CHEBI:57566"/>
        <dbReference type="ChEBI" id="CHEBI:58593"/>
        <dbReference type="ChEBI" id="CHEBI:456216"/>
        <dbReference type="EC" id="2.7.4.25"/>
    </reaction>
</comment>
<comment type="subcellular location">
    <subcellularLocation>
        <location evidence="1">Cytoplasm</location>
    </subcellularLocation>
</comment>
<comment type="similarity">
    <text evidence="1">Belongs to the cytidylate kinase family. Type 1 subfamily.</text>
</comment>
<keyword id="KW-0067">ATP-binding</keyword>
<keyword id="KW-0963">Cytoplasm</keyword>
<keyword id="KW-0418">Kinase</keyword>
<keyword id="KW-0547">Nucleotide-binding</keyword>
<keyword id="KW-0808">Transferase</keyword>
<gene>
    <name evidence="1" type="primary">cmk</name>
    <name type="ordered locus">PA14_23320</name>
</gene>
<organism>
    <name type="scientific">Pseudomonas aeruginosa (strain UCBPP-PA14)</name>
    <dbReference type="NCBI Taxonomy" id="208963"/>
    <lineage>
        <taxon>Bacteria</taxon>
        <taxon>Pseudomonadati</taxon>
        <taxon>Pseudomonadota</taxon>
        <taxon>Gammaproteobacteria</taxon>
        <taxon>Pseudomonadales</taxon>
        <taxon>Pseudomonadaceae</taxon>
        <taxon>Pseudomonas</taxon>
    </lineage>
</organism>
<reference key="1">
    <citation type="journal article" date="2006" name="Genome Biol.">
        <title>Genomic analysis reveals that Pseudomonas aeruginosa virulence is combinatorial.</title>
        <authorList>
            <person name="Lee D.G."/>
            <person name="Urbach J.M."/>
            <person name="Wu G."/>
            <person name="Liberati N.T."/>
            <person name="Feinbaum R.L."/>
            <person name="Miyata S."/>
            <person name="Diggins L.T."/>
            <person name="He J."/>
            <person name="Saucier M."/>
            <person name="Deziel E."/>
            <person name="Friedman L."/>
            <person name="Li L."/>
            <person name="Grills G."/>
            <person name="Montgomery K."/>
            <person name="Kucherlapati R."/>
            <person name="Rahme L.G."/>
            <person name="Ausubel F.M."/>
        </authorList>
    </citation>
    <scope>NUCLEOTIDE SEQUENCE [LARGE SCALE GENOMIC DNA]</scope>
    <source>
        <strain>UCBPP-PA14</strain>
    </source>
</reference>